<proteinExistence type="inferred from homology"/>
<name>XNI_SHESH</name>
<organism>
    <name type="scientific">Shewanella sediminis (strain HAW-EB3)</name>
    <dbReference type="NCBI Taxonomy" id="425104"/>
    <lineage>
        <taxon>Bacteria</taxon>
        <taxon>Pseudomonadati</taxon>
        <taxon>Pseudomonadota</taxon>
        <taxon>Gammaproteobacteria</taxon>
        <taxon>Alteromonadales</taxon>
        <taxon>Shewanellaceae</taxon>
        <taxon>Shewanella</taxon>
    </lineage>
</organism>
<accession>A8FYJ2</accession>
<dbReference type="EC" id="3.1.-.-" evidence="1"/>
<dbReference type="EMBL" id="CP000821">
    <property type="protein sequence ID" value="ABV37915.1"/>
    <property type="molecule type" value="Genomic_DNA"/>
</dbReference>
<dbReference type="RefSeq" id="WP_012143645.1">
    <property type="nucleotide sequence ID" value="NC_009831.1"/>
</dbReference>
<dbReference type="SMR" id="A8FYJ2"/>
<dbReference type="STRING" id="425104.Ssed_3311"/>
<dbReference type="KEGG" id="sse:Ssed_3311"/>
<dbReference type="eggNOG" id="COG0258">
    <property type="taxonomic scope" value="Bacteria"/>
</dbReference>
<dbReference type="HOGENOM" id="CLU_004675_1_2_6"/>
<dbReference type="OrthoDB" id="8070997at2"/>
<dbReference type="Proteomes" id="UP000002015">
    <property type="component" value="Chromosome"/>
</dbReference>
<dbReference type="GO" id="GO:0008409">
    <property type="term" value="F:5'-3' exonuclease activity"/>
    <property type="evidence" value="ECO:0007669"/>
    <property type="project" value="InterPro"/>
</dbReference>
<dbReference type="GO" id="GO:0017108">
    <property type="term" value="F:5'-flap endonuclease activity"/>
    <property type="evidence" value="ECO:0007669"/>
    <property type="project" value="UniProtKB-UniRule"/>
</dbReference>
<dbReference type="GO" id="GO:0003677">
    <property type="term" value="F:DNA binding"/>
    <property type="evidence" value="ECO:0007669"/>
    <property type="project" value="UniProtKB-UniRule"/>
</dbReference>
<dbReference type="GO" id="GO:0000287">
    <property type="term" value="F:magnesium ion binding"/>
    <property type="evidence" value="ECO:0007669"/>
    <property type="project" value="UniProtKB-UniRule"/>
</dbReference>
<dbReference type="GO" id="GO:0030955">
    <property type="term" value="F:potassium ion binding"/>
    <property type="evidence" value="ECO:0007669"/>
    <property type="project" value="UniProtKB-UniRule"/>
</dbReference>
<dbReference type="GO" id="GO:0033567">
    <property type="term" value="P:DNA replication, Okazaki fragment processing"/>
    <property type="evidence" value="ECO:0007669"/>
    <property type="project" value="UniProtKB-UniRule"/>
</dbReference>
<dbReference type="CDD" id="cd09898">
    <property type="entry name" value="H3TH_53EXO"/>
    <property type="match status" value="1"/>
</dbReference>
<dbReference type="CDD" id="cd09859">
    <property type="entry name" value="PIN_53EXO"/>
    <property type="match status" value="1"/>
</dbReference>
<dbReference type="FunFam" id="1.10.150.20:FF:000003">
    <property type="entry name" value="DNA polymerase I"/>
    <property type="match status" value="1"/>
</dbReference>
<dbReference type="Gene3D" id="1.10.150.20">
    <property type="entry name" value="5' to 3' exonuclease, C-terminal subdomain"/>
    <property type="match status" value="1"/>
</dbReference>
<dbReference type="Gene3D" id="3.40.50.1010">
    <property type="entry name" value="5'-nuclease"/>
    <property type="match status" value="1"/>
</dbReference>
<dbReference type="HAMAP" id="MF_01192">
    <property type="entry name" value="Xni"/>
    <property type="match status" value="1"/>
</dbReference>
<dbReference type="InterPro" id="IPR020046">
    <property type="entry name" value="5-3_exonucl_a-hlix_arch_N"/>
</dbReference>
<dbReference type="InterPro" id="IPR002421">
    <property type="entry name" value="5-3_exonuclease"/>
</dbReference>
<dbReference type="InterPro" id="IPR036279">
    <property type="entry name" value="5-3_exonuclease_C_sf"/>
</dbReference>
<dbReference type="InterPro" id="IPR020045">
    <property type="entry name" value="DNA_polI_H3TH"/>
</dbReference>
<dbReference type="InterPro" id="IPR038969">
    <property type="entry name" value="FEN"/>
</dbReference>
<dbReference type="InterPro" id="IPR008918">
    <property type="entry name" value="HhH2"/>
</dbReference>
<dbReference type="InterPro" id="IPR029060">
    <property type="entry name" value="PIN-like_dom_sf"/>
</dbReference>
<dbReference type="InterPro" id="IPR022895">
    <property type="entry name" value="Xni"/>
</dbReference>
<dbReference type="NCBIfam" id="NF007017">
    <property type="entry name" value="PRK09482.1"/>
    <property type="match status" value="1"/>
</dbReference>
<dbReference type="PANTHER" id="PTHR42646:SF2">
    <property type="entry name" value="5'-3' EXONUCLEASE FAMILY PROTEIN"/>
    <property type="match status" value="1"/>
</dbReference>
<dbReference type="PANTHER" id="PTHR42646">
    <property type="entry name" value="FLAP ENDONUCLEASE XNI"/>
    <property type="match status" value="1"/>
</dbReference>
<dbReference type="Pfam" id="PF01367">
    <property type="entry name" value="5_3_exonuc"/>
    <property type="match status" value="1"/>
</dbReference>
<dbReference type="Pfam" id="PF02739">
    <property type="entry name" value="5_3_exonuc_N"/>
    <property type="match status" value="1"/>
</dbReference>
<dbReference type="SMART" id="SM00475">
    <property type="entry name" value="53EXOc"/>
    <property type="match status" value="1"/>
</dbReference>
<dbReference type="SMART" id="SM00279">
    <property type="entry name" value="HhH2"/>
    <property type="match status" value="1"/>
</dbReference>
<dbReference type="SUPFAM" id="SSF47807">
    <property type="entry name" value="5' to 3' exonuclease, C-terminal subdomain"/>
    <property type="match status" value="1"/>
</dbReference>
<dbReference type="SUPFAM" id="SSF88723">
    <property type="entry name" value="PIN domain-like"/>
    <property type="match status" value="1"/>
</dbReference>
<keyword id="KW-0238">DNA-binding</keyword>
<keyword id="KW-0255">Endonuclease</keyword>
<keyword id="KW-0378">Hydrolase</keyword>
<keyword id="KW-0460">Magnesium</keyword>
<keyword id="KW-0479">Metal-binding</keyword>
<keyword id="KW-0540">Nuclease</keyword>
<keyword id="KW-0630">Potassium</keyword>
<keyword id="KW-1185">Reference proteome</keyword>
<sequence>MNTFLIIDGMNLVRRMHAAQPNENDVNGLDIRVGSACKKLVKYHQPTHVAVVWDGDDISWRKHLFEDYKKGRKPMPEALSNTLPALKSYLAEQGVNSIDAASEADDVIATLASKLVANGGKAIIVSTDKGFTQLSDPYIQRWDHFNQHYMTIEEREEKLGVEHSQFIDYLALAGDSGNKIPGVPGIGPKSAIELLRTFRSLANIYASLDKIGAKQAKKLEAGKQMARLSYKLVQLQTDIPLNINLSQFRLPNPNA</sequence>
<evidence type="ECO:0000255" key="1">
    <source>
        <dbReference type="HAMAP-Rule" id="MF_01192"/>
    </source>
</evidence>
<comment type="function">
    <text evidence="1">Has flap endonuclease activity. During DNA replication, flap endonucleases cleave the 5'-overhanging flap structure that is generated by displacement synthesis when DNA polymerase encounters the 5'-end of a downstream Okazaki fragment.</text>
</comment>
<comment type="cofactor">
    <cofactor evidence="1">
        <name>Mg(2+)</name>
        <dbReference type="ChEBI" id="CHEBI:18420"/>
    </cofactor>
    <text evidence="1">Binds 2 Mg(2+) per subunit. Only one magnesium ion has a direct interaction with the protein, the other interactions are indirect.</text>
</comment>
<comment type="cofactor">
    <cofactor evidence="1">
        <name>K(+)</name>
        <dbReference type="ChEBI" id="CHEBI:29103"/>
    </cofactor>
    <text evidence="1">Binds 1 K(+) per subunit. The potassium ion strongly increases the affinity for DNA.</text>
</comment>
<comment type="similarity">
    <text evidence="1">Belongs to the Xni family.</text>
</comment>
<feature type="chain" id="PRO_1000085479" description="Flap endonuclease Xni">
    <location>
        <begin position="1"/>
        <end position="255"/>
    </location>
</feature>
<feature type="domain" description="5'-3' exonuclease" evidence="1">
    <location>
        <begin position="162"/>
        <end position="253"/>
    </location>
</feature>
<feature type="region of interest" description="Interaction with DNA" evidence="1">
    <location>
        <begin position="185"/>
        <end position="190"/>
    </location>
</feature>
<feature type="binding site" evidence="1">
    <location>
        <position position="105"/>
    </location>
    <ligand>
        <name>Mg(2+)</name>
        <dbReference type="ChEBI" id="CHEBI:18420"/>
    </ligand>
</feature>
<feature type="binding site" evidence="1">
    <location>
        <position position="172"/>
    </location>
    <ligand>
        <name>K(+)</name>
        <dbReference type="ChEBI" id="CHEBI:29103"/>
    </ligand>
</feature>
<feature type="binding site" evidence="1">
    <location>
        <position position="173"/>
    </location>
    <ligand>
        <name>K(+)</name>
        <dbReference type="ChEBI" id="CHEBI:29103"/>
    </ligand>
</feature>
<feature type="binding site" evidence="1">
    <location>
        <position position="181"/>
    </location>
    <ligand>
        <name>K(+)</name>
        <dbReference type="ChEBI" id="CHEBI:29103"/>
    </ligand>
</feature>
<feature type="binding site" evidence="1">
    <location>
        <position position="183"/>
    </location>
    <ligand>
        <name>K(+)</name>
        <dbReference type="ChEBI" id="CHEBI:29103"/>
    </ligand>
</feature>
<feature type="binding site" evidence="1">
    <location>
        <position position="186"/>
    </location>
    <ligand>
        <name>K(+)</name>
        <dbReference type="ChEBI" id="CHEBI:29103"/>
    </ligand>
</feature>
<reference key="1">
    <citation type="submission" date="2007-08" db="EMBL/GenBank/DDBJ databases">
        <title>Complete sequence of Shewanella sediminis HAW-EB3.</title>
        <authorList>
            <consortium name="US DOE Joint Genome Institute"/>
            <person name="Copeland A."/>
            <person name="Lucas S."/>
            <person name="Lapidus A."/>
            <person name="Barry K."/>
            <person name="Glavina del Rio T."/>
            <person name="Dalin E."/>
            <person name="Tice H."/>
            <person name="Pitluck S."/>
            <person name="Chertkov O."/>
            <person name="Brettin T."/>
            <person name="Bruce D."/>
            <person name="Detter J.C."/>
            <person name="Han C."/>
            <person name="Schmutz J."/>
            <person name="Larimer F."/>
            <person name="Land M."/>
            <person name="Hauser L."/>
            <person name="Kyrpides N."/>
            <person name="Kim E."/>
            <person name="Zhao J.-S."/>
            <person name="Richardson P."/>
        </authorList>
    </citation>
    <scope>NUCLEOTIDE SEQUENCE [LARGE SCALE GENOMIC DNA]</scope>
    <source>
        <strain>HAW-EB3</strain>
    </source>
</reference>
<gene>
    <name evidence="1" type="primary">xni</name>
    <name evidence="1" type="synonym">ygdG</name>
    <name type="ordered locus">Ssed_3311</name>
</gene>
<protein>
    <recommendedName>
        <fullName evidence="1">Flap endonuclease Xni</fullName>
        <shortName evidence="1">FEN</shortName>
        <ecNumber evidence="1">3.1.-.-</ecNumber>
    </recommendedName>
</protein>